<dbReference type="EMBL" id="U11790">
    <property type="protein sequence ID" value="AAB17358.2"/>
    <property type="molecule type" value="mRNA"/>
</dbReference>
<dbReference type="RefSeq" id="NP_001233671.1">
    <property type="nucleotide sequence ID" value="NM_001246742.1"/>
</dbReference>
<dbReference type="SMR" id="P70096"/>
<dbReference type="BioGRID" id="1613894">
    <property type="interactions" value="1"/>
</dbReference>
<dbReference type="iPTMnet" id="P70096"/>
<dbReference type="PaxDb" id="10029-XP_007608905.1"/>
<dbReference type="Ensembl" id="ENSCGRT00001030117.1">
    <property type="protein sequence ID" value="ENSCGRP00001025871.1"/>
    <property type="gene ID" value="ENSCGRG00001023322.1"/>
</dbReference>
<dbReference type="GeneID" id="100689309"/>
<dbReference type="KEGG" id="cge:100689309"/>
<dbReference type="CTD" id="11004"/>
<dbReference type="eggNOG" id="KOG0246">
    <property type="taxonomic scope" value="Eukaryota"/>
</dbReference>
<dbReference type="GeneTree" id="ENSGT00940000154046"/>
<dbReference type="OMA" id="RTTLECH"/>
<dbReference type="OrthoDB" id="3176171at2759"/>
<dbReference type="Proteomes" id="UP000694386">
    <property type="component" value="Unplaced"/>
</dbReference>
<dbReference type="Proteomes" id="UP001108280">
    <property type="component" value="Chromosome 2"/>
</dbReference>
<dbReference type="GO" id="GO:0005737">
    <property type="term" value="C:cytoplasm"/>
    <property type="evidence" value="ECO:0007669"/>
    <property type="project" value="UniProtKB-KW"/>
</dbReference>
<dbReference type="GO" id="GO:0098978">
    <property type="term" value="C:glutamatergic synapse"/>
    <property type="evidence" value="ECO:0007669"/>
    <property type="project" value="Ensembl"/>
</dbReference>
<dbReference type="GO" id="GO:0000776">
    <property type="term" value="C:kinetochore"/>
    <property type="evidence" value="ECO:0000250"/>
    <property type="project" value="UniProtKB"/>
</dbReference>
<dbReference type="GO" id="GO:0035371">
    <property type="term" value="C:microtubule plus-end"/>
    <property type="evidence" value="ECO:0000250"/>
    <property type="project" value="UniProtKB"/>
</dbReference>
<dbReference type="GO" id="GO:0030496">
    <property type="term" value="C:midbody"/>
    <property type="evidence" value="ECO:0000314"/>
    <property type="project" value="UniProtKB"/>
</dbReference>
<dbReference type="GO" id="GO:0005634">
    <property type="term" value="C:nucleus"/>
    <property type="evidence" value="ECO:0007669"/>
    <property type="project" value="UniProtKB-SubCell"/>
</dbReference>
<dbReference type="GO" id="GO:0098794">
    <property type="term" value="C:postsynapse"/>
    <property type="evidence" value="ECO:0007669"/>
    <property type="project" value="Ensembl"/>
</dbReference>
<dbReference type="GO" id="GO:0098793">
    <property type="term" value="C:presynapse"/>
    <property type="evidence" value="ECO:0007669"/>
    <property type="project" value="Ensembl"/>
</dbReference>
<dbReference type="GO" id="GO:0005524">
    <property type="term" value="F:ATP binding"/>
    <property type="evidence" value="ECO:0007669"/>
    <property type="project" value="UniProtKB-KW"/>
</dbReference>
<dbReference type="GO" id="GO:0003777">
    <property type="term" value="F:microtubule motor activity"/>
    <property type="evidence" value="ECO:0007669"/>
    <property type="project" value="InterPro"/>
</dbReference>
<dbReference type="GO" id="GO:0051010">
    <property type="term" value="F:microtubule plus-end binding"/>
    <property type="evidence" value="ECO:0000250"/>
    <property type="project" value="UniProtKB"/>
</dbReference>
<dbReference type="GO" id="GO:0051315">
    <property type="term" value="P:attachment of mitotic spindle microtubules to kinetochore"/>
    <property type="evidence" value="ECO:0000250"/>
    <property type="project" value="UniProtKB"/>
</dbReference>
<dbReference type="GO" id="GO:0051301">
    <property type="term" value="P:cell division"/>
    <property type="evidence" value="ECO:0007669"/>
    <property type="project" value="UniProtKB-KW"/>
</dbReference>
<dbReference type="GO" id="GO:0030951">
    <property type="term" value="P:establishment or maintenance of microtubule cytoskeleton polarity"/>
    <property type="evidence" value="ECO:0007669"/>
    <property type="project" value="Ensembl"/>
</dbReference>
<dbReference type="GO" id="GO:0051310">
    <property type="term" value="P:metaphase chromosome alignment"/>
    <property type="evidence" value="ECO:0000250"/>
    <property type="project" value="UniProtKB"/>
</dbReference>
<dbReference type="GO" id="GO:0007019">
    <property type="term" value="P:microtubule depolymerization"/>
    <property type="evidence" value="ECO:0000314"/>
    <property type="project" value="UniProtKB"/>
</dbReference>
<dbReference type="GO" id="GO:0007018">
    <property type="term" value="P:microtubule-based movement"/>
    <property type="evidence" value="ECO:0007669"/>
    <property type="project" value="InterPro"/>
</dbReference>
<dbReference type="GO" id="GO:0007080">
    <property type="term" value="P:mitotic metaphase chromosome alignment"/>
    <property type="evidence" value="ECO:0000250"/>
    <property type="project" value="UniProtKB"/>
</dbReference>
<dbReference type="GO" id="GO:0099188">
    <property type="term" value="P:postsynaptic cytoskeleton organization"/>
    <property type="evidence" value="ECO:0007669"/>
    <property type="project" value="Ensembl"/>
</dbReference>
<dbReference type="GO" id="GO:0051983">
    <property type="term" value="P:regulation of chromosome segregation"/>
    <property type="evidence" value="ECO:0000250"/>
    <property type="project" value="UniProtKB"/>
</dbReference>
<dbReference type="GO" id="GO:0098696">
    <property type="term" value="P:regulation of neurotransmitter receptor localization to postsynaptic specialization membrane"/>
    <property type="evidence" value="ECO:0007669"/>
    <property type="project" value="Ensembl"/>
</dbReference>
<dbReference type="CDD" id="cd01367">
    <property type="entry name" value="KISc_KIF2_like"/>
    <property type="match status" value="1"/>
</dbReference>
<dbReference type="FunFam" id="3.40.850.10:FF:000006">
    <property type="entry name" value="Kinesin-like protein"/>
    <property type="match status" value="1"/>
</dbReference>
<dbReference type="Gene3D" id="3.40.850.10">
    <property type="entry name" value="Kinesin motor domain"/>
    <property type="match status" value="1"/>
</dbReference>
<dbReference type="InterPro" id="IPR054473">
    <property type="entry name" value="KIF2A-like_N"/>
</dbReference>
<dbReference type="InterPro" id="IPR027640">
    <property type="entry name" value="Kinesin-like_fam"/>
</dbReference>
<dbReference type="InterPro" id="IPR019821">
    <property type="entry name" value="Kinesin_motor_CS"/>
</dbReference>
<dbReference type="InterPro" id="IPR001752">
    <property type="entry name" value="Kinesin_motor_dom"/>
</dbReference>
<dbReference type="InterPro" id="IPR036961">
    <property type="entry name" value="Kinesin_motor_dom_sf"/>
</dbReference>
<dbReference type="InterPro" id="IPR027417">
    <property type="entry name" value="P-loop_NTPase"/>
</dbReference>
<dbReference type="PANTHER" id="PTHR47971:SF25">
    <property type="entry name" value="KINESIN-LIKE PROTEIN KIF2C"/>
    <property type="match status" value="1"/>
</dbReference>
<dbReference type="PANTHER" id="PTHR47971">
    <property type="entry name" value="KINESIN-RELATED PROTEIN 6"/>
    <property type="match status" value="1"/>
</dbReference>
<dbReference type="Pfam" id="PF22923">
    <property type="entry name" value="KIF2A-like_1st"/>
    <property type="match status" value="1"/>
</dbReference>
<dbReference type="Pfam" id="PF00225">
    <property type="entry name" value="Kinesin"/>
    <property type="match status" value="1"/>
</dbReference>
<dbReference type="PRINTS" id="PR00380">
    <property type="entry name" value="KINESINHEAVY"/>
</dbReference>
<dbReference type="SMART" id="SM00129">
    <property type="entry name" value="KISc"/>
    <property type="match status" value="1"/>
</dbReference>
<dbReference type="SUPFAM" id="SSF52540">
    <property type="entry name" value="P-loop containing nucleoside triphosphate hydrolases"/>
    <property type="match status" value="1"/>
</dbReference>
<dbReference type="PROSITE" id="PS00411">
    <property type="entry name" value="KINESIN_MOTOR_1"/>
    <property type="match status" value="1"/>
</dbReference>
<dbReference type="PROSITE" id="PS50067">
    <property type="entry name" value="KINESIN_MOTOR_2"/>
    <property type="match status" value="1"/>
</dbReference>
<name>KIF2C_CRIGR</name>
<sequence>MESLPARLFPGLSIKIQRSNGLIHSANISTVNVEKSCVSVEWIEGGNTKGKEIDFDDVAAINPELLQLLPLHPKDNLPLQENVTVPKQKRRSVNSKIPAPKEGLRSRSTRMSTVPEVRIATQENEMEVELPVATNSRKQFSVATGLPRPSCPAMTELPLSMVSEEAEEQVHPTRSTSSANPARRKSCIVKEMEKMKNKREEKRAQNSEIRIKRAQEYDSSFPNWEFARMIKEFRVTIECHPLTLTDPTEEHRICVCVRKRPLNKQELAKKEIDVISVPSKCLLFVHEPKLKVDLTKYLENQAFCFDFAFDETASNEVVYRFTARPLVQTIFEGGKATCFAYGQTGSGKTHTMGGDLSGKSQNTSKGIYAMASRDVFLLKSQPRYRNLNLEVYVTFFEIYNGKVFDLLNKKAKLRVLEDSKQQVQVVGLQEYLVNCADDVIKMLNMGSACRTSGQTFANSNSSRSHACFQILLRAKGRLHGKFSLVDLAGNERGADTSSADRQTRMEGAEINKSLLALKECIRALGQNKAHTPFRESKLTQVLRDSFIGENSRTCMIAMISPGISSCEYTLNTLRYADRVKELSPHSGLSGEQPIQMETEEMEASSNGTSLAVNFKEEEELSSQMSSFNEAMSQIRELEERAMEELREIIQQGPGWLELSEMTDQPDYDLETFVNKAESALTQQTKHFSALREVIKALRVAMQLEEQASKQMNSKKRHQ</sequence>
<accession>P70096</accession>
<proteinExistence type="evidence at protein level"/>
<gene>
    <name type="primary">KIF2C</name>
    <name type="synonym">KNSL6</name>
</gene>
<reference key="1">
    <citation type="journal article" date="1995" name="J. Cell Biol.">
        <title>Identification and partial characterization of mitotic centromere-associated kinesin, a kinesin-related protein that associates with centromeres during mitosis.</title>
        <authorList>
            <person name="Wordeman L."/>
            <person name="Mitchison T.J."/>
        </authorList>
    </citation>
    <scope>NUCLEOTIDE SEQUENCE [MRNA]</scope>
    <scope>SUBCELLULAR LOCATION</scope>
</reference>
<reference key="2">
    <citation type="submission" date="1999-03" db="EMBL/GenBank/DDBJ databases">
        <authorList>
            <person name="Wordeman L."/>
        </authorList>
    </citation>
    <scope>SEQUENCE REVISION</scope>
</reference>
<reference key="3">
    <citation type="journal article" date="2004" name="Dev. Cell">
        <title>Aurora B regulates MCAK at the mitotic centromere.</title>
        <authorList>
            <person name="Andrews P.D."/>
            <person name="Ovechkina Y."/>
            <person name="Morrice N."/>
            <person name="Wagenbach M."/>
            <person name="Duncan K."/>
            <person name="Wordeman L."/>
            <person name="Swedlow J.R."/>
        </authorList>
    </citation>
    <scope>FUNCTION</scope>
    <scope>SUBCELLULAR LOCATION</scope>
    <scope>PHOSPHORYLATION AT SER-92; SER-106; SER-108; SER-112 AND SER-186</scope>
    <scope>MUTAGENESIS OF SER-92; SER-106; SER-108; SER-112 AND SER-186</scope>
</reference>
<reference key="4">
    <citation type="journal article" date="2008" name="J. Cell Biol.">
        <title>A kinesin-13 mutant catalytically depolymerizes microtubules in ADP.</title>
        <authorList>
            <person name="Wagenbach M."/>
            <person name="Domnitz S."/>
            <person name="Wordeman L."/>
            <person name="Cooper J."/>
        </authorList>
    </citation>
    <scope>MUTAGENESIS OF GLY-489 AND GLU-491</scope>
</reference>
<reference key="5">
    <citation type="journal article" date="2009" name="EMBO Rep.">
        <title>TIP150 interacts with and targets MCAK at the microtubule plus ends.</title>
        <authorList>
            <person name="Jiang K."/>
            <person name="Wang J."/>
            <person name="Liu J."/>
            <person name="Ward T."/>
            <person name="Wordeman L."/>
            <person name="Davidson A."/>
            <person name="Wang F."/>
            <person name="Yao X."/>
        </authorList>
    </citation>
    <scope>INTERACTION WITH MTUS2 AND MAPRE1</scope>
    <scope>MUTAGENESIS OF SER-92</scope>
    <scope>SUBCELLULAR LOCATION</scope>
</reference>
<feature type="chain" id="PRO_0000125417" description="Kinesin-like protein KIF2C">
    <location>
        <begin position="1"/>
        <end position="718"/>
    </location>
</feature>
<feature type="domain" description="Kinesin motor" evidence="4">
    <location>
        <begin position="252"/>
        <end position="582"/>
    </location>
</feature>
<feature type="region of interest" description="Globular" evidence="3">
    <location>
        <begin position="1"/>
        <end position="248"/>
    </location>
</feature>
<feature type="region of interest" description="Disordered" evidence="5">
    <location>
        <begin position="86"/>
        <end position="111"/>
    </location>
</feature>
<feature type="region of interest" description="Negative regulator of microtubule-binding" evidence="1">
    <location>
        <begin position="201"/>
        <end position="232"/>
    </location>
</feature>
<feature type="coiled-coil region" evidence="3">
    <location>
        <begin position="613"/>
        <end position="651"/>
    </location>
</feature>
<feature type="coiled-coil region" evidence="3">
    <location>
        <begin position="689"/>
        <end position="716"/>
    </location>
</feature>
<feature type="short sequence motif" description="Microtubule tip localization signal">
    <location>
        <begin position="95"/>
        <end position="98"/>
    </location>
</feature>
<feature type="short sequence motif" description="Nuclear localization signal" evidence="3">
    <location>
        <begin position="409"/>
        <end position="412"/>
    </location>
</feature>
<feature type="binding site" evidence="1">
    <location>
        <position position="258"/>
    </location>
    <ligand>
        <name>ATP</name>
        <dbReference type="ChEBI" id="CHEBI:30616"/>
    </ligand>
</feature>
<feature type="binding site" evidence="4">
    <location>
        <begin position="342"/>
        <end position="349"/>
    </location>
    <ligand>
        <name>ATP</name>
        <dbReference type="ChEBI" id="CHEBI:30616"/>
    </ligand>
</feature>
<feature type="modified residue" description="Phosphoserine" evidence="2">
    <location>
        <position position="3"/>
    </location>
</feature>
<feature type="modified residue" description="Phosphoserine" evidence="2">
    <location>
        <position position="19"/>
    </location>
</feature>
<feature type="modified residue" description="Phosphoserine; by AURKB" evidence="2">
    <location>
        <position position="92"/>
    </location>
</feature>
<feature type="modified residue" description="Phosphoserine" evidence="6">
    <location>
        <position position="106"/>
    </location>
</feature>
<feature type="modified residue" description="Phosphoserine" evidence="6">
    <location>
        <position position="108"/>
    </location>
</feature>
<feature type="modified residue" description="Phosphoserine" evidence="6">
    <location>
        <position position="112"/>
    </location>
</feature>
<feature type="modified residue" description="Phosphoserine" evidence="2">
    <location>
        <position position="163"/>
    </location>
</feature>
<feature type="modified residue" description="Phosphoserine" evidence="6">
    <location>
        <position position="186"/>
    </location>
</feature>
<feature type="modified residue" description="Phosphoserine" evidence="2">
    <location>
        <position position="513"/>
    </location>
</feature>
<feature type="modified residue" description="Phosphoserine" evidence="2">
    <location>
        <position position="626"/>
    </location>
</feature>
<feature type="mutagenesis site" description="Increased frequency of metaphase figures; when associated with A-106; A-108; A-112 and A-186." evidence="6 8">
    <original>S</original>
    <variation>A</variation>
    <location>
        <position position="92"/>
    </location>
</feature>
<feature type="mutagenesis site" description="Altered interaction with MTUS2/TIP150 and association with microtubules. Altered localization, reduced microtubule depolymerizing activity and increased frequency of prometaphase figures; when associated with E-106; E-108; E-112 and E-186." evidence="6 8">
    <original>S</original>
    <variation>E</variation>
    <location>
        <position position="92"/>
    </location>
</feature>
<feature type="mutagenesis site" description="Increased frequency of metaphase figures; when associated with A-92; A-108; A-112 and A-186." evidence="6">
    <original>S</original>
    <variation>A</variation>
    <location>
        <position position="106"/>
    </location>
</feature>
<feature type="mutagenesis site" description="Altered localization, reduced microtubule depolymerizing activity and increased frequency of prometaphase figures; when associated with E-92; E-108; E-112 and E-186." evidence="6">
    <original>S</original>
    <variation>E</variation>
    <location>
        <position position="106"/>
    </location>
</feature>
<feature type="mutagenesis site" description="Increased frequency of metaphase figures; when associated with A-92; A-106; A-112 and A-186." evidence="6">
    <original>S</original>
    <variation>A</variation>
    <location>
        <position position="108"/>
    </location>
</feature>
<feature type="mutagenesis site" description="Altered localization, reduced microtubule depolymerizing activity and increased frequency of prometaphase figures; when associated with E-92; E-106; E-112 and E-186." evidence="6">
    <original>S</original>
    <variation>E</variation>
    <location>
        <position position="108"/>
    </location>
</feature>
<feature type="mutagenesis site" description="Increased frequency of metaphase figures; when associated with A-92; A-106; A-108 and A-186." evidence="6">
    <original>S</original>
    <variation>A</variation>
    <location>
        <position position="112"/>
    </location>
</feature>
<feature type="mutagenesis site" description="Altered localization, reduced microtubule depolymerizing activity and increased frequency of prometaphase figures; when associated with E-92; E-106; E-108 and E-186." evidence="6">
    <original>S</original>
    <variation>E</variation>
    <location>
        <position position="112"/>
    </location>
</feature>
<feature type="mutagenesis site" description="Increased frequency of metaphase figures; when associated with A-92; A-106; A-108 and A-112." evidence="6">
    <original>S</original>
    <variation>A</variation>
    <location>
        <position position="186"/>
    </location>
</feature>
<feature type="mutagenesis site" description="Altered localization, reduced microtubule depolymerizing activity and increased frequency of prometaphase figures; when associated with E-92; E-106; E-108 and E-112." evidence="6">
    <original>S</original>
    <variation>E</variation>
    <location>
        <position position="186"/>
    </location>
</feature>
<feature type="mutagenesis site" description="No effect on microtubule depolymerization but unable to release tubulin dimers to recycle catalytically." evidence="7">
    <original>G</original>
    <variation>A</variation>
    <location>
        <position position="489"/>
    </location>
</feature>
<feature type="mutagenesis site" description="No effect on microtubule depolymerization but unable to release tubulin dimers to recycle catalytically." evidence="7">
    <original>E</original>
    <variation>A</variation>
    <location>
        <position position="491"/>
    </location>
</feature>
<protein>
    <recommendedName>
        <fullName>Kinesin-like protein KIF2C</fullName>
    </recommendedName>
    <alternativeName>
        <fullName>Kinesin-like protein 6</fullName>
    </alternativeName>
    <alternativeName>
        <fullName>Mitotic centromere-associated kinesin</fullName>
        <shortName>MCAK</shortName>
    </alternativeName>
</protein>
<keyword id="KW-0067">ATP-binding</keyword>
<keyword id="KW-0131">Cell cycle</keyword>
<keyword id="KW-0132">Cell division</keyword>
<keyword id="KW-0137">Centromere</keyword>
<keyword id="KW-0158">Chromosome</keyword>
<keyword id="KW-0159">Chromosome partition</keyword>
<keyword id="KW-0175">Coiled coil</keyword>
<keyword id="KW-0963">Cytoplasm</keyword>
<keyword id="KW-0206">Cytoskeleton</keyword>
<keyword id="KW-0995">Kinetochore</keyword>
<keyword id="KW-0493">Microtubule</keyword>
<keyword id="KW-0498">Mitosis</keyword>
<keyword id="KW-0547">Nucleotide-binding</keyword>
<keyword id="KW-0539">Nucleus</keyword>
<keyword id="KW-0597">Phosphoprotein</keyword>
<keyword id="KW-0832">Ubl conjugation</keyword>
<comment type="function">
    <text evidence="2 6">In complex with KIF18B, constitutes the major microtubule plus-end depolymerizing activity in mitotic cells (By similarity). Regulates the turnover of microtubules at the kinetochore and functions in chromosome segregation during mitosis (PubMed:14960279). Plays a role in chromosome congression and is required for the lateral to end-on conversion of the chromosome-microtubule attachment (By similarity).</text>
</comment>
<comment type="subunit">
    <text evidence="2 8">Interacts with CENPH (By similarity). Interacts with MTUS2/TIP150; the interaction is direct (PubMed:19543227). Interacts with MAPRE1; the interaction is direct, regulated by phosphorylation and is probably required for targeting to growing microtubule plus ends (PubMed:19543227). Interacts with KIF18B at microtubule tips; this interaction increases the affinity of both partners for microtubule plus ends and is required for robust microtubule depolymerization. Phosphorylation by AURKA or AURKB strongly reduces KIF18B-binding (By similarity).</text>
</comment>
<comment type="subcellular location">
    <subcellularLocation>
        <location evidence="8">Cytoplasm</location>
        <location evidence="8">Cytoskeleton</location>
    </subcellularLocation>
    <subcellularLocation>
        <location evidence="9">Nucleus</location>
    </subcellularLocation>
    <subcellularLocation>
        <location evidence="6 9">Chromosome</location>
        <location evidence="6 9">Centromere</location>
    </subcellularLocation>
    <subcellularLocation>
        <location evidence="6 9">Chromosome</location>
        <location evidence="6 9">Centromere</location>
        <location evidence="6 9">Kinetochore</location>
    </subcellularLocation>
    <text evidence="2 8">Associates with the microtubule network at the growing distal tip (the plus-end) of microtubules, through interaction with MTUS2/TIP150 and MAPRE1 (PubMed:19543227). Association with microtubule plus ends is also mediated by interaction with KIF18B (By similarity). Centromeric localization requires the presence of BUB1 and SGO2 (By similarity).</text>
</comment>
<comment type="domain">
    <text evidence="2">The microtubule tip localization signal (MtLS) motif; mediates interaction with MAPRE1 and targeting to the growing microtubule plus ends.</text>
</comment>
<comment type="PTM">
    <text evidence="6">Phosphorylation by AURKB, regulates association with centromeres and kinetochores and the microtubule depolymerization activity.</text>
</comment>
<comment type="PTM">
    <text evidence="2">Ubiquitinated.</text>
</comment>
<comment type="similarity">
    <text evidence="4">Belongs to the TRAFAC class myosin-kinesin ATPase superfamily. Kinesin family. MCAK/KIF2 subfamily.</text>
</comment>
<evidence type="ECO:0000250" key="1"/>
<evidence type="ECO:0000250" key="2">
    <source>
        <dbReference type="UniProtKB" id="Q99661"/>
    </source>
</evidence>
<evidence type="ECO:0000255" key="3"/>
<evidence type="ECO:0000255" key="4">
    <source>
        <dbReference type="PROSITE-ProRule" id="PRU00283"/>
    </source>
</evidence>
<evidence type="ECO:0000256" key="5">
    <source>
        <dbReference type="SAM" id="MobiDB-lite"/>
    </source>
</evidence>
<evidence type="ECO:0000269" key="6">
    <source>
    </source>
</evidence>
<evidence type="ECO:0000269" key="7">
    <source>
    </source>
</evidence>
<evidence type="ECO:0000269" key="8">
    <source>
    </source>
</evidence>
<evidence type="ECO:0000269" key="9">
    <source>
    </source>
</evidence>
<organism>
    <name type="scientific">Cricetulus griseus</name>
    <name type="common">Chinese hamster</name>
    <name type="synonym">Cricetulus barabensis griseus</name>
    <dbReference type="NCBI Taxonomy" id="10029"/>
    <lineage>
        <taxon>Eukaryota</taxon>
        <taxon>Metazoa</taxon>
        <taxon>Chordata</taxon>
        <taxon>Craniata</taxon>
        <taxon>Vertebrata</taxon>
        <taxon>Euteleostomi</taxon>
        <taxon>Mammalia</taxon>
        <taxon>Eutheria</taxon>
        <taxon>Euarchontoglires</taxon>
        <taxon>Glires</taxon>
        <taxon>Rodentia</taxon>
        <taxon>Myomorpha</taxon>
        <taxon>Muroidea</taxon>
        <taxon>Cricetidae</taxon>
        <taxon>Cricetinae</taxon>
        <taxon>Cricetulus</taxon>
    </lineage>
</organism>